<sequence length="205" mass="23053">MSTKKRRVLKIIILGDSGVGKTSLMNQYVQKKFTKEYKATIGADFLTKEIEVDDKKVTMQIWDTAGQERFQSLGSAFYRGADCCMLVFDVNNAKSFDDLDNWRDEFIIQAGPSDPDNFPFVVLGNKIDEVGVNRQVTEKKAKAWCASKGSIPYFETSAKEDINVEAAFTCITRNALRNEKEEELFVPDAVDMNTSATQRKRGGCC</sequence>
<name>YPTV5_VOLCA</name>
<gene>
    <name type="primary">YPTV5</name>
</gene>
<organism>
    <name type="scientific">Volvox carteri</name>
    <name type="common">Green alga</name>
    <dbReference type="NCBI Taxonomy" id="3067"/>
    <lineage>
        <taxon>Eukaryota</taxon>
        <taxon>Viridiplantae</taxon>
        <taxon>Chlorophyta</taxon>
        <taxon>core chlorophytes</taxon>
        <taxon>Chlorophyceae</taxon>
        <taxon>CS clade</taxon>
        <taxon>Chlamydomonadales</taxon>
        <taxon>Volvocaceae</taxon>
        <taxon>Volvox</taxon>
    </lineage>
</organism>
<protein>
    <recommendedName>
        <fullName>GTP-binding protein yptV5</fullName>
    </recommendedName>
</protein>
<reference key="1">
    <citation type="journal article" date="1993" name="Curr. Genet.">
        <title>Structure, expression, and phylogenetic relationships of a family of ypt genes encoding small G-proteins in the green alga Volvox carteri.</title>
        <authorList>
            <person name="Fabry S."/>
            <person name="Jacobsen A."/>
            <person name="Huber H."/>
            <person name="Palme K."/>
            <person name="Schmitt R."/>
        </authorList>
    </citation>
    <scope>NUCLEOTIDE SEQUENCE [GENOMIC DNA]</scope>
    <source>
        <strain>f. Nagariensis / HK10</strain>
    </source>
</reference>
<keyword id="KW-1003">Cell membrane</keyword>
<keyword id="KW-0342">GTP-binding</keyword>
<keyword id="KW-0449">Lipoprotein</keyword>
<keyword id="KW-0472">Membrane</keyword>
<keyword id="KW-0547">Nucleotide-binding</keyword>
<keyword id="KW-0636">Prenylation</keyword>
<keyword id="KW-0653">Protein transport</keyword>
<keyword id="KW-0813">Transport</keyword>
<proteinExistence type="inferred from homology"/>
<comment type="function">
    <text evidence="1">Protein transport. Probably involved in vesicular traffic (By similarity).</text>
</comment>
<comment type="subcellular location">
    <subcellularLocation>
        <location evidence="2">Cell membrane</location>
        <topology evidence="2">Lipid-anchor</topology>
        <orientation evidence="2">Cytoplasmic side</orientation>
    </subcellularLocation>
</comment>
<comment type="similarity">
    <text evidence="2">Belongs to the small GTPase superfamily. Rab family.</text>
</comment>
<feature type="chain" id="PRO_0000121304" description="GTP-binding protein yptV5">
    <location>
        <begin position="1"/>
        <end position="205"/>
    </location>
</feature>
<feature type="short sequence motif" description="Effector region" evidence="2">
    <location>
        <begin position="37"/>
        <end position="45"/>
    </location>
</feature>
<feature type="binding site" evidence="1">
    <location>
        <begin position="15"/>
        <end position="22"/>
    </location>
    <ligand>
        <name>GTP</name>
        <dbReference type="ChEBI" id="CHEBI:37565"/>
    </ligand>
</feature>
<feature type="binding site" evidence="1">
    <location>
        <begin position="63"/>
        <end position="67"/>
    </location>
    <ligand>
        <name>GTP</name>
        <dbReference type="ChEBI" id="CHEBI:37565"/>
    </ligand>
</feature>
<feature type="binding site" evidence="1">
    <location>
        <begin position="125"/>
        <end position="128"/>
    </location>
    <ligand>
        <name>GTP</name>
        <dbReference type="ChEBI" id="CHEBI:37565"/>
    </ligand>
</feature>
<feature type="lipid moiety-binding region" description="S-geranylgeranyl cysteine" evidence="1">
    <location>
        <position position="204"/>
    </location>
</feature>
<feature type="lipid moiety-binding region" description="S-geranylgeranyl cysteine" evidence="1">
    <location>
        <position position="205"/>
    </location>
</feature>
<accession>P36864</accession>
<dbReference type="EMBL" id="L08131">
    <property type="protein sequence ID" value="AAA34254.1"/>
    <property type="molecule type" value="Genomic_DNA"/>
</dbReference>
<dbReference type="PIR" id="S36368">
    <property type="entry name" value="S36368"/>
</dbReference>
<dbReference type="SMR" id="P36864"/>
<dbReference type="GO" id="GO:0005886">
    <property type="term" value="C:plasma membrane"/>
    <property type="evidence" value="ECO:0007669"/>
    <property type="project" value="UniProtKB-SubCell"/>
</dbReference>
<dbReference type="GO" id="GO:0005774">
    <property type="term" value="C:vacuolar membrane"/>
    <property type="evidence" value="ECO:0007669"/>
    <property type="project" value="TreeGrafter"/>
</dbReference>
<dbReference type="GO" id="GO:0005525">
    <property type="term" value="F:GTP binding"/>
    <property type="evidence" value="ECO:0007669"/>
    <property type="project" value="UniProtKB-KW"/>
</dbReference>
<dbReference type="GO" id="GO:0003924">
    <property type="term" value="F:GTPase activity"/>
    <property type="evidence" value="ECO:0007669"/>
    <property type="project" value="InterPro"/>
</dbReference>
<dbReference type="GO" id="GO:0015031">
    <property type="term" value="P:protein transport"/>
    <property type="evidence" value="ECO:0007669"/>
    <property type="project" value="UniProtKB-KW"/>
</dbReference>
<dbReference type="CDD" id="cd01862">
    <property type="entry name" value="Rab7"/>
    <property type="match status" value="1"/>
</dbReference>
<dbReference type="FunFam" id="3.40.50.300:FF:000086">
    <property type="entry name" value="Ras-related small GTPase"/>
    <property type="match status" value="1"/>
</dbReference>
<dbReference type="Gene3D" id="3.40.50.300">
    <property type="entry name" value="P-loop containing nucleotide triphosphate hydrolases"/>
    <property type="match status" value="1"/>
</dbReference>
<dbReference type="InterPro" id="IPR027417">
    <property type="entry name" value="P-loop_NTPase"/>
</dbReference>
<dbReference type="InterPro" id="IPR005225">
    <property type="entry name" value="Small_GTP-bd"/>
</dbReference>
<dbReference type="InterPro" id="IPR001806">
    <property type="entry name" value="Small_GTPase"/>
</dbReference>
<dbReference type="NCBIfam" id="TIGR00231">
    <property type="entry name" value="small_GTP"/>
    <property type="match status" value="1"/>
</dbReference>
<dbReference type="PANTHER" id="PTHR47981">
    <property type="entry name" value="RAB FAMILY"/>
    <property type="match status" value="1"/>
</dbReference>
<dbReference type="PANTHER" id="PTHR47981:SF20">
    <property type="entry name" value="RAS-RELATED PROTEIN RAB-7A"/>
    <property type="match status" value="1"/>
</dbReference>
<dbReference type="Pfam" id="PF00071">
    <property type="entry name" value="Ras"/>
    <property type="match status" value="1"/>
</dbReference>
<dbReference type="PRINTS" id="PR00449">
    <property type="entry name" value="RASTRNSFRMNG"/>
</dbReference>
<dbReference type="SMART" id="SM00175">
    <property type="entry name" value="RAB"/>
    <property type="match status" value="1"/>
</dbReference>
<dbReference type="SMART" id="SM00176">
    <property type="entry name" value="RAN"/>
    <property type="match status" value="1"/>
</dbReference>
<dbReference type="SMART" id="SM00173">
    <property type="entry name" value="RAS"/>
    <property type="match status" value="1"/>
</dbReference>
<dbReference type="SMART" id="SM00174">
    <property type="entry name" value="RHO"/>
    <property type="match status" value="1"/>
</dbReference>
<dbReference type="SUPFAM" id="SSF52540">
    <property type="entry name" value="P-loop containing nucleoside triphosphate hydrolases"/>
    <property type="match status" value="1"/>
</dbReference>
<dbReference type="PROSITE" id="PS51419">
    <property type="entry name" value="RAB"/>
    <property type="match status" value="1"/>
</dbReference>
<evidence type="ECO:0000250" key="1"/>
<evidence type="ECO:0000305" key="2"/>